<organism>
    <name type="scientific">Ureaplasma parvum serovar 3 (strain ATCC 27815 / 27 / NCTC 11736)</name>
    <dbReference type="NCBI Taxonomy" id="505682"/>
    <lineage>
        <taxon>Bacteria</taxon>
        <taxon>Bacillati</taxon>
        <taxon>Mycoplasmatota</taxon>
        <taxon>Mycoplasmoidales</taxon>
        <taxon>Mycoplasmoidaceae</taxon>
        <taxon>Ureaplasma</taxon>
    </lineage>
</organism>
<reference key="1">
    <citation type="submission" date="2008-02" db="EMBL/GenBank/DDBJ databases">
        <title>Genome sequence of Ureaplasma parvum serovar 3.</title>
        <authorList>
            <person name="Methe B.A."/>
            <person name="Glass J."/>
            <person name="Waites K."/>
            <person name="Shrivastava S."/>
        </authorList>
    </citation>
    <scope>NUCLEOTIDE SEQUENCE [LARGE SCALE GENOMIC DNA]</scope>
    <source>
        <strain>ATCC 27815 / 27 / NCTC 11736</strain>
    </source>
</reference>
<gene>
    <name evidence="1" type="primary">asnA</name>
    <name type="ordered locus">UPA3_0379</name>
</gene>
<keyword id="KW-0028">Amino-acid biosynthesis</keyword>
<keyword id="KW-0061">Asparagine biosynthesis</keyword>
<keyword id="KW-0067">ATP-binding</keyword>
<keyword id="KW-0963">Cytoplasm</keyword>
<keyword id="KW-0436">Ligase</keyword>
<keyword id="KW-0547">Nucleotide-binding</keyword>
<sequence length="329" mass="38305">MDQLQKAKINQTQKAIVEIKNSFQKHFAKNLNLSRVTAPLFVEGQSGLNDHLDHKQKAVSFYAKKLDKTLEIVQSLAKWKRLALLDYGFSLYEGLYTDMNAIRADDDIDEIHSIYVDQWDWEILINNQDCNLDFLKSIVNKIYSTIRIVQLEIDQLYNPKQIILPDSITFISSQELEDLYPHLSPSRREYEFAKIHKAIFIYQIGYPLKSGYIQSIRSPEYDNWNLNGDLIVYHKLNDQAIELSSMGIRVSKQDFIKQTNFANLKNDQENNFYHQMILNNQLPQTIGGGIGQSRLCMFLLNKKHIGEVQVSVWPNEYKDELLKKGIKLL</sequence>
<accession>B1AJ02</accession>
<proteinExistence type="inferred from homology"/>
<comment type="catalytic activity">
    <reaction evidence="1">
        <text>L-aspartate + NH4(+) + ATP = L-asparagine + AMP + diphosphate + H(+)</text>
        <dbReference type="Rhea" id="RHEA:11372"/>
        <dbReference type="ChEBI" id="CHEBI:15378"/>
        <dbReference type="ChEBI" id="CHEBI:28938"/>
        <dbReference type="ChEBI" id="CHEBI:29991"/>
        <dbReference type="ChEBI" id="CHEBI:30616"/>
        <dbReference type="ChEBI" id="CHEBI:33019"/>
        <dbReference type="ChEBI" id="CHEBI:58048"/>
        <dbReference type="ChEBI" id="CHEBI:456215"/>
        <dbReference type="EC" id="6.3.1.1"/>
    </reaction>
</comment>
<comment type="pathway">
    <text evidence="1">Amino-acid biosynthesis; L-asparagine biosynthesis; L-asparagine from L-aspartate (ammonia route): step 1/1.</text>
</comment>
<comment type="subcellular location">
    <subcellularLocation>
        <location evidence="1">Cytoplasm</location>
    </subcellularLocation>
</comment>
<comment type="similarity">
    <text evidence="1">Belongs to the class-II aminoacyl-tRNA synthetase family. AsnA subfamily.</text>
</comment>
<name>ASNA_UREP2</name>
<evidence type="ECO:0000255" key="1">
    <source>
        <dbReference type="HAMAP-Rule" id="MF_00555"/>
    </source>
</evidence>
<feature type="chain" id="PRO_1000081984" description="Aspartate--ammonia ligase">
    <location>
        <begin position="1"/>
        <end position="329"/>
    </location>
</feature>
<protein>
    <recommendedName>
        <fullName evidence="1">Aspartate--ammonia ligase</fullName>
        <ecNumber evidence="1">6.3.1.1</ecNumber>
    </recommendedName>
    <alternativeName>
        <fullName evidence="1">Asparagine synthetase A</fullName>
    </alternativeName>
</protein>
<dbReference type="EC" id="6.3.1.1" evidence="1"/>
<dbReference type="EMBL" id="CP000942">
    <property type="protein sequence ID" value="ACA32853.1"/>
    <property type="molecule type" value="Genomic_DNA"/>
</dbReference>
<dbReference type="RefSeq" id="WP_006688600.1">
    <property type="nucleotide sequence ID" value="NC_010503.1"/>
</dbReference>
<dbReference type="SMR" id="B1AJ02"/>
<dbReference type="GeneID" id="29672372"/>
<dbReference type="KEGG" id="upa:UPA3_0379"/>
<dbReference type="HOGENOM" id="CLU_071543_0_0_14"/>
<dbReference type="UniPathway" id="UPA00134">
    <property type="reaction ID" value="UER00194"/>
</dbReference>
<dbReference type="Proteomes" id="UP000002162">
    <property type="component" value="Chromosome"/>
</dbReference>
<dbReference type="GO" id="GO:0005829">
    <property type="term" value="C:cytosol"/>
    <property type="evidence" value="ECO:0007669"/>
    <property type="project" value="TreeGrafter"/>
</dbReference>
<dbReference type="GO" id="GO:0004071">
    <property type="term" value="F:aspartate-ammonia ligase activity"/>
    <property type="evidence" value="ECO:0007669"/>
    <property type="project" value="UniProtKB-UniRule"/>
</dbReference>
<dbReference type="GO" id="GO:0005524">
    <property type="term" value="F:ATP binding"/>
    <property type="evidence" value="ECO:0007669"/>
    <property type="project" value="UniProtKB-UniRule"/>
</dbReference>
<dbReference type="GO" id="GO:0070981">
    <property type="term" value="P:L-asparagine biosynthetic process"/>
    <property type="evidence" value="ECO:0007669"/>
    <property type="project" value="UniProtKB-UniRule"/>
</dbReference>
<dbReference type="Gene3D" id="3.30.930.10">
    <property type="entry name" value="Bira Bifunctional Protein, Domain 2"/>
    <property type="match status" value="1"/>
</dbReference>
<dbReference type="HAMAP" id="MF_00555">
    <property type="entry name" value="AsnA"/>
    <property type="match status" value="1"/>
</dbReference>
<dbReference type="InterPro" id="IPR006195">
    <property type="entry name" value="aa-tRNA-synth_II"/>
</dbReference>
<dbReference type="InterPro" id="IPR045864">
    <property type="entry name" value="aa-tRNA-synth_II/BPL/LPL"/>
</dbReference>
<dbReference type="InterPro" id="IPR004618">
    <property type="entry name" value="AsnA"/>
</dbReference>
<dbReference type="PANTHER" id="PTHR30073">
    <property type="entry name" value="ASPARTATE--AMMONIA LIGASE"/>
    <property type="match status" value="1"/>
</dbReference>
<dbReference type="PANTHER" id="PTHR30073:SF5">
    <property type="entry name" value="ASPARTATE--AMMONIA LIGASE"/>
    <property type="match status" value="1"/>
</dbReference>
<dbReference type="Pfam" id="PF03590">
    <property type="entry name" value="AsnA"/>
    <property type="match status" value="1"/>
</dbReference>
<dbReference type="PIRSF" id="PIRSF001555">
    <property type="entry name" value="Asp_ammon_ligase"/>
    <property type="match status" value="1"/>
</dbReference>
<dbReference type="SUPFAM" id="SSF55681">
    <property type="entry name" value="Class II aaRS and biotin synthetases"/>
    <property type="match status" value="1"/>
</dbReference>
<dbReference type="PROSITE" id="PS50862">
    <property type="entry name" value="AA_TRNA_LIGASE_II"/>
    <property type="match status" value="1"/>
</dbReference>